<gene>
    <name evidence="4" type="primary">gnd</name>
</gene>
<proteinExistence type="evidence at protein level"/>
<dbReference type="EC" id="1.1.1.44" evidence="3"/>
<dbReference type="EMBL" id="D88189">
    <property type="protein sequence ID" value="BAA13558.1"/>
    <property type="molecule type" value="Genomic_DNA"/>
</dbReference>
<dbReference type="PIR" id="JC5282">
    <property type="entry name" value="JC5282"/>
</dbReference>
<dbReference type="RefSeq" id="WP_005545119.1">
    <property type="nucleotide sequence ID" value="NZ_VSEV01000005.1"/>
</dbReference>
<dbReference type="SMR" id="P70718"/>
<dbReference type="STRING" id="714.ACT75_04165"/>
<dbReference type="OMA" id="CVTHVGP"/>
<dbReference type="UniPathway" id="UPA00115">
    <property type="reaction ID" value="UER00410"/>
</dbReference>
<dbReference type="GO" id="GO:0050661">
    <property type="term" value="F:NADP binding"/>
    <property type="evidence" value="ECO:0007669"/>
    <property type="project" value="InterPro"/>
</dbReference>
<dbReference type="GO" id="GO:0004616">
    <property type="term" value="F:phosphogluconate dehydrogenase (decarboxylating) activity"/>
    <property type="evidence" value="ECO:0007669"/>
    <property type="project" value="UniProtKB-EC"/>
</dbReference>
<dbReference type="GO" id="GO:0019521">
    <property type="term" value="P:D-gluconate metabolic process"/>
    <property type="evidence" value="ECO:0007669"/>
    <property type="project" value="UniProtKB-KW"/>
</dbReference>
<dbReference type="GO" id="GO:0016054">
    <property type="term" value="P:organic acid catabolic process"/>
    <property type="evidence" value="ECO:0007669"/>
    <property type="project" value="UniProtKB-ARBA"/>
</dbReference>
<dbReference type="GO" id="GO:0006098">
    <property type="term" value="P:pentose-phosphate shunt"/>
    <property type="evidence" value="ECO:0007669"/>
    <property type="project" value="UniProtKB-UniPathway"/>
</dbReference>
<dbReference type="FunFam" id="1.10.1040.10:FF:000002">
    <property type="entry name" value="6-phosphogluconate dehydrogenase, decarboxylating"/>
    <property type="match status" value="1"/>
</dbReference>
<dbReference type="FunFam" id="1.20.5.320:FF:000002">
    <property type="entry name" value="6-phosphogluconate dehydrogenase, decarboxylating"/>
    <property type="match status" value="1"/>
</dbReference>
<dbReference type="FunFam" id="3.40.50.720:FF:000007">
    <property type="entry name" value="6-phosphogluconate dehydrogenase, decarboxylating"/>
    <property type="match status" value="1"/>
</dbReference>
<dbReference type="Gene3D" id="1.20.5.320">
    <property type="entry name" value="6-Phosphogluconate Dehydrogenase, domain 3"/>
    <property type="match status" value="1"/>
</dbReference>
<dbReference type="Gene3D" id="1.10.1040.10">
    <property type="entry name" value="N-(1-d-carboxylethyl)-l-norvaline Dehydrogenase, domain 2"/>
    <property type="match status" value="1"/>
</dbReference>
<dbReference type="Gene3D" id="3.40.50.720">
    <property type="entry name" value="NAD(P)-binding Rossmann-like Domain"/>
    <property type="match status" value="1"/>
</dbReference>
<dbReference type="InterPro" id="IPR008927">
    <property type="entry name" value="6-PGluconate_DH-like_C_sf"/>
</dbReference>
<dbReference type="InterPro" id="IPR013328">
    <property type="entry name" value="6PGD_dom2"/>
</dbReference>
<dbReference type="InterPro" id="IPR006114">
    <property type="entry name" value="6PGDH_C"/>
</dbReference>
<dbReference type="InterPro" id="IPR006113">
    <property type="entry name" value="6PGDH_Gnd/GntZ"/>
</dbReference>
<dbReference type="InterPro" id="IPR006115">
    <property type="entry name" value="6PGDH_NADP-bd"/>
</dbReference>
<dbReference type="InterPro" id="IPR006184">
    <property type="entry name" value="6PGdom_BS"/>
</dbReference>
<dbReference type="InterPro" id="IPR036291">
    <property type="entry name" value="NAD(P)-bd_dom_sf"/>
</dbReference>
<dbReference type="InterPro" id="IPR006183">
    <property type="entry name" value="Pgluconate_DH"/>
</dbReference>
<dbReference type="NCBIfam" id="TIGR00873">
    <property type="entry name" value="gnd"/>
    <property type="match status" value="1"/>
</dbReference>
<dbReference type="NCBIfam" id="NF006765">
    <property type="entry name" value="PRK09287.1"/>
    <property type="match status" value="1"/>
</dbReference>
<dbReference type="PANTHER" id="PTHR11811">
    <property type="entry name" value="6-PHOSPHOGLUCONATE DEHYDROGENASE"/>
    <property type="match status" value="1"/>
</dbReference>
<dbReference type="Pfam" id="PF00393">
    <property type="entry name" value="6PGD"/>
    <property type="match status" value="1"/>
</dbReference>
<dbReference type="Pfam" id="PF03446">
    <property type="entry name" value="NAD_binding_2"/>
    <property type="match status" value="1"/>
</dbReference>
<dbReference type="PIRSF" id="PIRSF000109">
    <property type="entry name" value="6PGD"/>
    <property type="match status" value="1"/>
</dbReference>
<dbReference type="PRINTS" id="PR00076">
    <property type="entry name" value="6PGDHDRGNASE"/>
</dbReference>
<dbReference type="SMART" id="SM01350">
    <property type="entry name" value="6PGD"/>
    <property type="match status" value="1"/>
</dbReference>
<dbReference type="SUPFAM" id="SSF48179">
    <property type="entry name" value="6-phosphogluconate dehydrogenase C-terminal domain-like"/>
    <property type="match status" value="1"/>
</dbReference>
<dbReference type="SUPFAM" id="SSF51735">
    <property type="entry name" value="NAD(P)-binding Rossmann-fold domains"/>
    <property type="match status" value="1"/>
</dbReference>
<dbReference type="PROSITE" id="PS00461">
    <property type="entry name" value="6PGD"/>
    <property type="match status" value="1"/>
</dbReference>
<protein>
    <recommendedName>
        <fullName evidence="5">6-phosphogluconate dehydrogenase, decarboxylating</fullName>
        <ecNumber evidence="3">1.1.1.44</ecNumber>
    </recommendedName>
</protein>
<name>6PGD_AGGAC</name>
<organism>
    <name type="scientific">Aggregatibacter actinomycetemcomitans</name>
    <name type="common">Actinobacillus actinomycetemcomitans</name>
    <name type="synonym">Haemophilus actinomycetemcomitans</name>
    <dbReference type="NCBI Taxonomy" id="714"/>
    <lineage>
        <taxon>Bacteria</taxon>
        <taxon>Pseudomonadati</taxon>
        <taxon>Pseudomonadota</taxon>
        <taxon>Gammaproteobacteria</taxon>
        <taxon>Pasteurellales</taxon>
        <taxon>Pasteurellaceae</taxon>
        <taxon>Aggregatibacter</taxon>
    </lineage>
</organism>
<feature type="chain" id="PRO_0000090024" description="6-phosphogluconate dehydrogenase, decarboxylating">
    <location>
        <begin position="1"/>
        <end position="484"/>
    </location>
</feature>
<feature type="active site" description="Proton acceptor" evidence="2">
    <location>
        <position position="185"/>
    </location>
</feature>
<feature type="active site" description="Proton donor" evidence="2">
    <location>
        <position position="192"/>
    </location>
</feature>
<feature type="binding site" evidence="2">
    <location>
        <begin position="11"/>
        <end position="16"/>
    </location>
    <ligand>
        <name>NADP(+)</name>
        <dbReference type="ChEBI" id="CHEBI:58349"/>
    </ligand>
</feature>
<feature type="binding site" evidence="2">
    <location>
        <begin position="34"/>
        <end position="36"/>
    </location>
    <ligand>
        <name>NADP(+)</name>
        <dbReference type="ChEBI" id="CHEBI:58349"/>
    </ligand>
</feature>
<feature type="binding site" evidence="2">
    <location>
        <begin position="76"/>
        <end position="78"/>
    </location>
    <ligand>
        <name>NADP(+)</name>
        <dbReference type="ChEBI" id="CHEBI:58349"/>
    </ligand>
</feature>
<feature type="binding site" evidence="2">
    <location>
        <position position="104"/>
    </location>
    <ligand>
        <name>NADP(+)</name>
        <dbReference type="ChEBI" id="CHEBI:58349"/>
    </ligand>
</feature>
<feature type="binding site" description="in other chain" evidence="2">
    <location>
        <position position="104"/>
    </location>
    <ligand>
        <name>substrate</name>
        <note>ligand shared between dimeric partners</note>
    </ligand>
</feature>
<feature type="binding site" description="in other chain" evidence="2">
    <location>
        <begin position="130"/>
        <end position="132"/>
    </location>
    <ligand>
        <name>substrate</name>
        <note>ligand shared between dimeric partners</note>
    </ligand>
</feature>
<feature type="binding site" description="in other chain" evidence="2">
    <location>
        <begin position="188"/>
        <end position="189"/>
    </location>
    <ligand>
        <name>substrate</name>
        <note>ligand shared between dimeric partners</note>
    </ligand>
</feature>
<feature type="binding site" description="in other chain" evidence="2">
    <location>
        <position position="193"/>
    </location>
    <ligand>
        <name>substrate</name>
        <note>ligand shared between dimeric partners</note>
    </ligand>
</feature>
<feature type="binding site" description="in other chain" evidence="2">
    <location>
        <position position="262"/>
    </location>
    <ligand>
        <name>substrate</name>
        <note>ligand shared between dimeric partners</note>
    </ligand>
</feature>
<feature type="binding site" description="in other chain" evidence="2">
    <location>
        <position position="289"/>
    </location>
    <ligand>
        <name>substrate</name>
        <note>ligand shared between dimeric partners</note>
    </ligand>
</feature>
<feature type="binding site" evidence="2">
    <location>
        <position position="447"/>
    </location>
    <ligand>
        <name>substrate</name>
        <note>ligand shared between dimeric partners</note>
    </ligand>
</feature>
<feature type="binding site" evidence="2">
    <location>
        <position position="453"/>
    </location>
    <ligand>
        <name>substrate</name>
        <note>ligand shared between dimeric partners</note>
    </ligand>
</feature>
<accession>P70718</accession>
<sequence length="484" mass="53289">MSVKGDIGVIGLAVMGQNLILNMNDHGFKVVAYNRTTSKVDEFLEGAAKGTNIIGAYSLEDLANKLEKPRKVMLMVRAGEVVDHFIDALLPHLEAGDIIIDGGNSNYPDTNRRVAALREKGIRFIGTGVSGGEEGARHGPSIMPGGNEEAWQFVKPVLQAISAKTEQGEPCCDWVGKDGAGHFVKMVHNGIEYGDMQLICEAYQFLKEGVGLSDDELQATFNEWRNTELDSYLIDITADILGYKDADGSRLVDKVLDTAGQKGTGKWTGINALDFGIPLTLITESVFARCVSAFKDQRVAASKLFHKTIGKVEGDKKVWIEAVRKALLASKIISYAQGFMLIREASEHFNWNINYGNTALLWREGCIIRSRFLGNIRDAYEANPDLIFLGSDSYFKGILENAMSDWRKVVAKSIEVGIPMPCMASAITFLDGYTSARLPANLLQAQRDYFGAHTYERTDKPRGEFFHTNWTGRGGNTASTTYDV</sequence>
<comment type="function">
    <text evidence="3">Catalyzes the oxidative decarboxylation of 6-phosphogluconate to ribulose 5-phosphate and CO(2), with concomitant reduction of NADP to NADPH.</text>
</comment>
<comment type="catalytic activity">
    <reaction evidence="3">
        <text>6-phospho-D-gluconate + NADP(+) = D-ribulose 5-phosphate + CO2 + NADPH</text>
        <dbReference type="Rhea" id="RHEA:10116"/>
        <dbReference type="ChEBI" id="CHEBI:16526"/>
        <dbReference type="ChEBI" id="CHEBI:57783"/>
        <dbReference type="ChEBI" id="CHEBI:58121"/>
        <dbReference type="ChEBI" id="CHEBI:58349"/>
        <dbReference type="ChEBI" id="CHEBI:58759"/>
        <dbReference type="EC" id="1.1.1.44"/>
    </reaction>
</comment>
<comment type="pathway">
    <text evidence="1">Carbohydrate degradation; pentose phosphate pathway; D-ribulose 5-phosphate from D-glucose 6-phosphate (oxidative stage): step 3/3.</text>
</comment>
<comment type="subunit">
    <text evidence="1">Homodimer.</text>
</comment>
<comment type="similarity">
    <text evidence="5">Belongs to the 6-phosphogluconate dehydrogenase family.</text>
</comment>
<reference key="1">
    <citation type="journal article" date="1997" name="Biochem. Biophys. Res. Commun.">
        <title>The gnd gene encoding a novel 6-phosphogluconate dehydrogenase and its adjacent region of Actinobacillus actinomycetemcomitans chromosomal DNA.</title>
        <authorList>
            <person name="Yoshida Y."/>
            <person name="Nakano Y."/>
            <person name="Yamashita Y."/>
            <person name="Koga T."/>
        </authorList>
    </citation>
    <scope>NUCLEOTIDE SEQUENCE [GENOMIC DNA]</scope>
    <scope>FUNCTION</scope>
    <scope>CATALYTIC ACTIVITY</scope>
    <source>
        <strain>ATCC 43718 / FDC Y4 / Serotype b</strain>
    </source>
</reference>
<evidence type="ECO:0000250" key="1">
    <source>
        <dbReference type="UniProtKB" id="P00350"/>
    </source>
</evidence>
<evidence type="ECO:0000250" key="2">
    <source>
        <dbReference type="UniProtKB" id="P96789"/>
    </source>
</evidence>
<evidence type="ECO:0000269" key="3">
    <source>
    </source>
</evidence>
<evidence type="ECO:0000303" key="4">
    <source>
    </source>
</evidence>
<evidence type="ECO:0000305" key="5"/>
<keyword id="KW-0311">Gluconate utilization</keyword>
<keyword id="KW-0521">NADP</keyword>
<keyword id="KW-0560">Oxidoreductase</keyword>
<keyword id="KW-0570">Pentose shunt</keyword>